<organismHost>
    <name type="scientific">Saimiri boliviensis boliviensis</name>
    <name type="common">Bolivian squirrel monkey</name>
    <dbReference type="NCBI Taxonomy" id="39432"/>
</organismHost>
<organism>
    <name type="scientific">Squirrel monkey polyomavirus</name>
    <dbReference type="NCBI Taxonomy" id="452475"/>
    <lineage>
        <taxon>Viruses</taxon>
        <taxon>Monodnaviria</taxon>
        <taxon>Shotokuvirae</taxon>
        <taxon>Cossaviricota</taxon>
        <taxon>Papovaviricetes</taxon>
        <taxon>Sepolyvirales</taxon>
        <taxon>Polyomaviridae</taxon>
        <taxon>Betapolyomavirus</taxon>
        <taxon>Betapolyomavirus saboliviensis</taxon>
    </lineage>
</organism>
<evidence type="ECO:0000250" key="1">
    <source>
        <dbReference type="UniProtKB" id="P03081"/>
    </source>
</evidence>
<sequence>MDYTLTREESKLLMELLGLPMEQYGNFPLMRKAFLQKCKIMHPDKGGDEQTAKMLISLYKKLESEVKSLNTDDGFSTEEVCKISKLTYIKDWLTCSFGSFSCKCLFCLLLKSHKQELTKKPKVWGDCLCFKCYTLWFGLQYTVDIYQSWQALIGVTLFKNLNI</sequence>
<name>ST_POVSM</name>
<protein>
    <recommendedName>
        <fullName>Small t antigen</fullName>
        <shortName>ST</shortName>
        <shortName>ST-AG</shortName>
    </recommendedName>
</protein>
<feature type="chain" id="PRO_0000356265" description="Small t antigen">
    <location>
        <begin position="1"/>
        <end position="163"/>
    </location>
</feature>
<feature type="domain" description="J">
    <location>
        <begin position="12"/>
        <end position="76"/>
    </location>
</feature>
<feature type="zinc finger region" description="C4-type; atypical">
    <location>
        <begin position="95"/>
        <end position="107"/>
    </location>
</feature>
<feature type="zinc finger region" description="H1C3-type; atypical">
    <location>
        <begin position="113"/>
        <end position="132"/>
    </location>
</feature>
<feature type="modified residue" description="N-acetylmethionine; by host" evidence="1">
    <location>
        <position position="1"/>
    </location>
</feature>
<keyword id="KW-0007">Acetylation</keyword>
<keyword id="KW-0010">Activator</keyword>
<keyword id="KW-0025">Alternative splicing</keyword>
<keyword id="KW-0244">Early protein</keyword>
<keyword id="KW-1035">Host cytoplasm</keyword>
<keyword id="KW-1048">Host nucleus</keyword>
<keyword id="KW-0945">Host-virus interaction</keyword>
<keyword id="KW-0479">Metal-binding</keyword>
<keyword id="KW-0553">Oncogene</keyword>
<keyword id="KW-0597">Phosphoprotein</keyword>
<keyword id="KW-1185">Reference proteome</keyword>
<keyword id="KW-0804">Transcription</keyword>
<keyword id="KW-0805">Transcription regulation</keyword>
<keyword id="KW-0862">Zinc</keyword>
<keyword id="KW-0863">Zinc-finger</keyword>
<proteinExistence type="inferred from homology"/>
<comment type="function">
    <text evidence="1">Promotes efficient viral genome replication by accelerating both G1 and S phase progression of the cell cycle. Inhibits host PP2A by binding to the A subunit, thereby displacing lower affinity regulatory B subunit. Inactivation of PP2A in turn results in the transactivation of cyclin A and cyclin D1 promoters. Late during the infection cycle, ST may induce dephosphorylation of host MTOR, leading to the inhibition of cap-dependent translation. May establish and maintain high levels of viral genomes during persistent infection in cell culture.</text>
</comment>
<comment type="subunit">
    <text evidence="1">Interacts with host PPP2R1A; the interaction inhibits PP2A activity.</text>
</comment>
<comment type="subcellular location">
    <subcellularLocation>
        <location>Host cytoplasm</location>
    </subcellularLocation>
    <subcellularLocation>
        <location evidence="1">Host nucleus</location>
    </subcellularLocation>
</comment>
<comment type="alternative products">
    <event type="alternative splicing"/>
    <isoform>
        <id>A8Y985-1</id>
        <name>Small t antigen</name>
        <sequence type="displayed"/>
    </isoform>
    <isoform>
        <id>A8Y984-1</id>
        <name>Large T antigen</name>
        <sequence type="external"/>
    </isoform>
</comment>
<comment type="domain">
    <text evidence="1">The common region of ST and LT proteins comprises the J domain. This domain is essential for multiple viral activities, including virion assembly, viral DNA replication, transformation and transcriptional activation. This domain is also required for cyclin A-transactivating activity of ST.</text>
</comment>
<reference key="1">
    <citation type="journal article" date="2008" name="J. Gen. Virol.">
        <title>Molecular characterization of the first polyomavirus from a New World primate: squirrel monkey polyomavirus.</title>
        <authorList>
            <person name="Verschoor E.J."/>
            <person name="Groenewoud M.J."/>
            <person name="Fagrouch Z."/>
            <person name="Kewalapat A."/>
            <person name="van Gessel S."/>
            <person name="Kik M.J."/>
            <person name="Heeney J.L."/>
        </authorList>
    </citation>
    <scope>NUCLEOTIDE SEQUENCE [GENOMIC DNA]</scope>
    <source>
        <strain>Squi0106</strain>
    </source>
</reference>
<accession>A8Y985</accession>
<dbReference type="EMBL" id="AM748741">
    <property type="protein sequence ID" value="CAO03084.1"/>
    <property type="molecule type" value="Genomic_DNA"/>
</dbReference>
<dbReference type="RefSeq" id="YP_001531350.1">
    <molecule id="A8Y985-1"/>
    <property type="nucleotide sequence ID" value="NC_009951.1"/>
</dbReference>
<dbReference type="SMR" id="A8Y985"/>
<dbReference type="GeneID" id="5714859"/>
<dbReference type="KEGG" id="vg:5714859"/>
<dbReference type="OrthoDB" id="14669at10239"/>
<dbReference type="Proteomes" id="UP000135044">
    <property type="component" value="Genome"/>
</dbReference>
<dbReference type="GO" id="GO:0030430">
    <property type="term" value="C:host cell cytoplasm"/>
    <property type="evidence" value="ECO:0007669"/>
    <property type="project" value="UniProtKB-SubCell"/>
</dbReference>
<dbReference type="GO" id="GO:0042025">
    <property type="term" value="C:host cell nucleus"/>
    <property type="evidence" value="ECO:0007669"/>
    <property type="project" value="UniProtKB-SubCell"/>
</dbReference>
<dbReference type="GO" id="GO:0008270">
    <property type="term" value="F:zinc ion binding"/>
    <property type="evidence" value="ECO:0007669"/>
    <property type="project" value="UniProtKB-KW"/>
</dbReference>
<dbReference type="Gene3D" id="1.10.287.110">
    <property type="entry name" value="DnaJ domain"/>
    <property type="match status" value="1"/>
</dbReference>
<dbReference type="Gene3D" id="1.20.120.1860">
    <property type="entry name" value="Small t-antigen, unique domain"/>
    <property type="match status" value="1"/>
</dbReference>
<dbReference type="InterPro" id="IPR001623">
    <property type="entry name" value="DnaJ_domain"/>
</dbReference>
<dbReference type="InterPro" id="IPR036869">
    <property type="entry name" value="J_dom_sf"/>
</dbReference>
<dbReference type="InterPro" id="IPR003354">
    <property type="entry name" value="Papo_T_antigen"/>
</dbReference>
<dbReference type="InterPro" id="IPR036092">
    <property type="entry name" value="Papo_T_antigensf"/>
</dbReference>
<dbReference type="Pfam" id="PF02380">
    <property type="entry name" value="Papo_T_antigen"/>
    <property type="match status" value="1"/>
</dbReference>
<dbReference type="SMART" id="SM00271">
    <property type="entry name" value="DnaJ"/>
    <property type="match status" value="1"/>
</dbReference>
<dbReference type="SUPFAM" id="SSF46565">
    <property type="entry name" value="Chaperone J-domain"/>
    <property type="match status" value="1"/>
</dbReference>
<dbReference type="SUPFAM" id="SSF161240">
    <property type="entry name" value="T-antigen specific domain-like"/>
    <property type="match status" value="1"/>
</dbReference>